<comment type="function">
    <text evidence="2">Binds calcium, zinc and copper. One subunit can simultaneously bind 2 calcium ions or 2 copper ions plus 1 zinc ion. Calcium and copper ions compete for the same binding sites.</text>
</comment>
<comment type="subunit">
    <text evidence="3">Homodimer.</text>
</comment>
<comment type="interaction">
    <interactant intactId="EBI-7211732">
        <id>P33763</id>
    </interactant>
    <interactant intactId="EBI-1047302">
        <id>Q9HB71</id>
        <label>CACYBP</label>
    </interactant>
    <organismsDiffer>false</organismsDiffer>
    <experiments>3</experiments>
</comment>
<comment type="interaction">
    <interactant intactId="EBI-7211732">
        <id>P33763</id>
    </interactant>
    <interactant intactId="EBI-355586">
        <id>P52907</id>
        <label>CAPZA1</label>
    </interactant>
    <organismsDiffer>false</organismsDiffer>
    <experiments>2</experiments>
</comment>
<comment type="interaction">
    <interactant intactId="EBI-7211732">
        <id>P33763</id>
    </interactant>
    <interactant intactId="EBI-398437">
        <id>O15151</id>
        <label>MDM4</label>
    </interactant>
    <organismsDiffer>false</organismsDiffer>
    <experiments>2</experiments>
</comment>
<comment type="interaction">
    <interactant intactId="EBI-7211732">
        <id>P33763</id>
    </interactant>
    <interactant intactId="EBI-350338">
        <id>P35579</id>
        <label>MYH9</label>
    </interactant>
    <organismsDiffer>false</organismsDiffer>
    <experiments>2</experiments>
</comment>
<comment type="interaction">
    <interactant intactId="EBI-7211732">
        <id>P33763</id>
    </interactant>
    <interactant intactId="EBI-2682189">
        <id>P32418</id>
        <label>SLC8A1</label>
    </interactant>
    <organismsDiffer>false</organismsDiffer>
    <experiments>2</experiments>
</comment>
<comment type="interaction">
    <interactant intactId="EBI-7211732">
        <id>P33763</id>
    </interactant>
    <interactant intactId="EBI-366083">
        <id>P04637</id>
        <label>TP53</label>
    </interactant>
    <organismsDiffer>false</organismsDiffer>
    <experiments>2</experiments>
</comment>
<comment type="interaction">
    <interactant intactId="EBI-7211732">
        <id>P33763</id>
    </interactant>
    <interactant intactId="EBI-11723041">
        <id>Q8TD43</id>
        <label>TRPM4</label>
    </interactant>
    <organismsDiffer>false</organismsDiffer>
    <experiments>3</experiments>
</comment>
<comment type="alternative products">
    <event type="alternative splicing"/>
    <isoform>
        <id>P33763-1</id>
        <name>1</name>
        <sequence type="displayed"/>
    </isoform>
    <isoform>
        <id>P33763-2</id>
        <name>2</name>
        <sequence type="described" ref="VSP_055506"/>
    </isoform>
</comment>
<comment type="similarity">
    <text evidence="5">Belongs to the S-100 family.</text>
</comment>
<comment type="sequence caution" evidence="5">
    <conflict type="erroneous initiation">
        <sequence resource="EMBL-CDS" id="CAA79472"/>
    </conflict>
</comment>
<comment type="sequence caution" evidence="5">
    <conflict type="erroneous initiation">
        <sequence resource="EMBL-CDS" id="CAA79475"/>
    </conflict>
</comment>
<comment type="sequence caution" evidence="5">
    <conflict type="erroneous initiation">
        <sequence resource="EMBL-CDS" id="CAA79479"/>
    </conflict>
</comment>
<feature type="chain" id="PRO_0000143980" description="Protein S100-A5">
    <location>
        <begin position="1"/>
        <end position="92"/>
    </location>
</feature>
<feature type="domain" description="EF-hand 1" evidence="5">
    <location>
        <begin position="12"/>
        <end position="47"/>
    </location>
</feature>
<feature type="domain" description="EF-hand 2" evidence="1">
    <location>
        <begin position="47"/>
        <end position="82"/>
    </location>
</feature>
<feature type="binding site" evidence="5">
    <location>
        <position position="28"/>
    </location>
    <ligand>
        <name>Ca(2+)</name>
        <dbReference type="ChEBI" id="CHEBI:29108"/>
        <label>1</label>
        <note>low affinity</note>
    </ligand>
</feature>
<feature type="binding site" evidence="5">
    <location>
        <position position="33"/>
    </location>
    <ligand>
        <name>Ca(2+)</name>
        <dbReference type="ChEBI" id="CHEBI:29108"/>
        <label>1</label>
        <note>low affinity</note>
    </ligand>
</feature>
<feature type="binding site" evidence="1">
    <location>
        <position position="60"/>
    </location>
    <ligand>
        <name>Ca(2+)</name>
        <dbReference type="ChEBI" id="CHEBI:29108"/>
        <label>2</label>
        <note>high affinity</note>
    </ligand>
</feature>
<feature type="binding site" evidence="1">
    <location>
        <position position="62"/>
    </location>
    <ligand>
        <name>Ca(2+)</name>
        <dbReference type="ChEBI" id="CHEBI:29108"/>
        <label>2</label>
        <note>high affinity</note>
    </ligand>
</feature>
<feature type="binding site" evidence="1">
    <location>
        <position position="64"/>
    </location>
    <ligand>
        <name>Ca(2+)</name>
        <dbReference type="ChEBI" id="CHEBI:29108"/>
        <label>2</label>
        <note>high affinity</note>
    </ligand>
</feature>
<feature type="binding site" evidence="1">
    <location>
        <position position="66"/>
    </location>
    <ligand>
        <name>Ca(2+)</name>
        <dbReference type="ChEBI" id="CHEBI:29108"/>
        <label>2</label>
        <note>high affinity</note>
    </ligand>
</feature>
<feature type="binding site" evidence="1">
    <location>
        <position position="71"/>
    </location>
    <ligand>
        <name>Ca(2+)</name>
        <dbReference type="ChEBI" id="CHEBI:29108"/>
        <label>2</label>
        <note>high affinity</note>
    </ligand>
</feature>
<feature type="splice variant" id="VSP_055506" description="In isoform 2." evidence="4">
    <original>M</original>
    <variation>MPAAWILWAHSHSELHTVM</variation>
    <location>
        <position position="1"/>
    </location>
</feature>
<feature type="sequence variant" id="VAR_001305" description="In dbSNP:rs3795393.">
    <original>D</original>
    <variation>G</variation>
    <location>
        <position position="54"/>
    </location>
</feature>
<feature type="helix" evidence="7">
    <location>
        <begin position="4"/>
        <end position="20"/>
    </location>
</feature>
<feature type="strand" evidence="7">
    <location>
        <begin position="22"/>
        <end position="24"/>
    </location>
</feature>
<feature type="strand" evidence="6">
    <location>
        <begin position="26"/>
        <end position="30"/>
    </location>
</feature>
<feature type="helix" evidence="7">
    <location>
        <begin position="31"/>
        <end position="41"/>
    </location>
</feature>
<feature type="turn" evidence="6">
    <location>
        <begin position="45"/>
        <end position="47"/>
    </location>
</feature>
<feature type="helix" evidence="7">
    <location>
        <begin position="51"/>
        <end position="59"/>
    </location>
</feature>
<feature type="turn" evidence="6">
    <location>
        <begin position="60"/>
        <end position="62"/>
    </location>
</feature>
<feature type="strand" evidence="7">
    <location>
        <begin position="64"/>
        <end position="67"/>
    </location>
</feature>
<feature type="helix" evidence="7">
    <location>
        <begin position="69"/>
        <end position="85"/>
    </location>
</feature>
<gene>
    <name type="primary">S100A5</name>
    <name type="synonym">S100D</name>
</gene>
<reference key="1">
    <citation type="journal article" date="1993" name="Proc. Natl. Acad. Sci. U.S.A.">
        <title>Six S100 genes are clustered on human chromosome 1q21: identification of two genes coding for the two previously unreported calcium-binding proteins S100D and S100E.</title>
        <authorList>
            <person name="Engelkamp D."/>
            <person name="Schaefer B.W."/>
            <person name="Mattei M.-G."/>
            <person name="Erne P."/>
            <person name="Heizmann C.W."/>
        </authorList>
    </citation>
    <scope>NUCLEOTIDE SEQUENCE [GENOMIC DNA / MRNA] (ISOFORM 1)</scope>
    <source>
        <tissue>Kidney</tissue>
    </source>
</reference>
<reference key="2">
    <citation type="journal article" date="2006" name="Nature">
        <title>The DNA sequence and biological annotation of human chromosome 1.</title>
        <authorList>
            <person name="Gregory S.G."/>
            <person name="Barlow K.F."/>
            <person name="McLay K.E."/>
            <person name="Kaul R."/>
            <person name="Swarbreck D."/>
            <person name="Dunham A."/>
            <person name="Scott C.E."/>
            <person name="Howe K.L."/>
            <person name="Woodfine K."/>
            <person name="Spencer C.C.A."/>
            <person name="Jones M.C."/>
            <person name="Gillson C."/>
            <person name="Searle S."/>
            <person name="Zhou Y."/>
            <person name="Kokocinski F."/>
            <person name="McDonald L."/>
            <person name="Evans R."/>
            <person name="Phillips K."/>
            <person name="Atkinson A."/>
            <person name="Cooper R."/>
            <person name="Jones C."/>
            <person name="Hall R.E."/>
            <person name="Andrews T.D."/>
            <person name="Lloyd C."/>
            <person name="Ainscough R."/>
            <person name="Almeida J.P."/>
            <person name="Ambrose K.D."/>
            <person name="Anderson F."/>
            <person name="Andrew R.W."/>
            <person name="Ashwell R.I.S."/>
            <person name="Aubin K."/>
            <person name="Babbage A.K."/>
            <person name="Bagguley C.L."/>
            <person name="Bailey J."/>
            <person name="Beasley H."/>
            <person name="Bethel G."/>
            <person name="Bird C.P."/>
            <person name="Bray-Allen S."/>
            <person name="Brown J.Y."/>
            <person name="Brown A.J."/>
            <person name="Buckley D."/>
            <person name="Burton J."/>
            <person name="Bye J."/>
            <person name="Carder C."/>
            <person name="Chapman J.C."/>
            <person name="Clark S.Y."/>
            <person name="Clarke G."/>
            <person name="Clee C."/>
            <person name="Cobley V."/>
            <person name="Collier R.E."/>
            <person name="Corby N."/>
            <person name="Coville G.J."/>
            <person name="Davies J."/>
            <person name="Deadman R."/>
            <person name="Dunn M."/>
            <person name="Earthrowl M."/>
            <person name="Ellington A.G."/>
            <person name="Errington H."/>
            <person name="Frankish A."/>
            <person name="Frankland J."/>
            <person name="French L."/>
            <person name="Garner P."/>
            <person name="Garnett J."/>
            <person name="Gay L."/>
            <person name="Ghori M.R.J."/>
            <person name="Gibson R."/>
            <person name="Gilby L.M."/>
            <person name="Gillett W."/>
            <person name="Glithero R.J."/>
            <person name="Grafham D.V."/>
            <person name="Griffiths C."/>
            <person name="Griffiths-Jones S."/>
            <person name="Grocock R."/>
            <person name="Hammond S."/>
            <person name="Harrison E.S.I."/>
            <person name="Hart E."/>
            <person name="Haugen E."/>
            <person name="Heath P.D."/>
            <person name="Holmes S."/>
            <person name="Holt K."/>
            <person name="Howden P.J."/>
            <person name="Hunt A.R."/>
            <person name="Hunt S.E."/>
            <person name="Hunter G."/>
            <person name="Isherwood J."/>
            <person name="James R."/>
            <person name="Johnson C."/>
            <person name="Johnson D."/>
            <person name="Joy A."/>
            <person name="Kay M."/>
            <person name="Kershaw J.K."/>
            <person name="Kibukawa M."/>
            <person name="Kimberley A.M."/>
            <person name="King A."/>
            <person name="Knights A.J."/>
            <person name="Lad H."/>
            <person name="Laird G."/>
            <person name="Lawlor S."/>
            <person name="Leongamornlert D.A."/>
            <person name="Lloyd D.M."/>
            <person name="Loveland J."/>
            <person name="Lovell J."/>
            <person name="Lush M.J."/>
            <person name="Lyne R."/>
            <person name="Martin S."/>
            <person name="Mashreghi-Mohammadi M."/>
            <person name="Matthews L."/>
            <person name="Matthews N.S.W."/>
            <person name="McLaren S."/>
            <person name="Milne S."/>
            <person name="Mistry S."/>
            <person name="Moore M.J.F."/>
            <person name="Nickerson T."/>
            <person name="O'Dell C.N."/>
            <person name="Oliver K."/>
            <person name="Palmeiri A."/>
            <person name="Palmer S.A."/>
            <person name="Parker A."/>
            <person name="Patel D."/>
            <person name="Pearce A.V."/>
            <person name="Peck A.I."/>
            <person name="Pelan S."/>
            <person name="Phelps K."/>
            <person name="Phillimore B.J."/>
            <person name="Plumb R."/>
            <person name="Rajan J."/>
            <person name="Raymond C."/>
            <person name="Rouse G."/>
            <person name="Saenphimmachak C."/>
            <person name="Sehra H.K."/>
            <person name="Sheridan E."/>
            <person name="Shownkeen R."/>
            <person name="Sims S."/>
            <person name="Skuce C.D."/>
            <person name="Smith M."/>
            <person name="Steward C."/>
            <person name="Subramanian S."/>
            <person name="Sycamore N."/>
            <person name="Tracey A."/>
            <person name="Tromans A."/>
            <person name="Van Helmond Z."/>
            <person name="Wall M."/>
            <person name="Wallis J.M."/>
            <person name="White S."/>
            <person name="Whitehead S.L."/>
            <person name="Wilkinson J.E."/>
            <person name="Willey D.L."/>
            <person name="Williams H."/>
            <person name="Wilming L."/>
            <person name="Wray P.W."/>
            <person name="Wu Z."/>
            <person name="Coulson A."/>
            <person name="Vaudin M."/>
            <person name="Sulston J.E."/>
            <person name="Durbin R.M."/>
            <person name="Hubbard T."/>
            <person name="Wooster R."/>
            <person name="Dunham I."/>
            <person name="Carter N.P."/>
            <person name="McVean G."/>
            <person name="Ross M.T."/>
            <person name="Harrow J."/>
            <person name="Olson M.V."/>
            <person name="Beck S."/>
            <person name="Rogers J."/>
            <person name="Bentley D.R."/>
        </authorList>
    </citation>
    <scope>NUCLEOTIDE SEQUENCE [LARGE SCALE GENOMIC DNA]</scope>
</reference>
<reference key="3">
    <citation type="submission" date="2005-09" db="EMBL/GenBank/DDBJ databases">
        <authorList>
            <person name="Mural R.J."/>
            <person name="Istrail S."/>
            <person name="Sutton G."/>
            <person name="Florea L."/>
            <person name="Halpern A.L."/>
            <person name="Mobarry C.M."/>
            <person name="Lippert R."/>
            <person name="Walenz B."/>
            <person name="Shatkay H."/>
            <person name="Dew I."/>
            <person name="Miller J.R."/>
            <person name="Flanigan M.J."/>
            <person name="Edwards N.J."/>
            <person name="Bolanos R."/>
            <person name="Fasulo D."/>
            <person name="Halldorsson B.V."/>
            <person name="Hannenhalli S."/>
            <person name="Turner R."/>
            <person name="Yooseph S."/>
            <person name="Lu F."/>
            <person name="Nusskern D.R."/>
            <person name="Shue B.C."/>
            <person name="Zheng X.H."/>
            <person name="Zhong F."/>
            <person name="Delcher A.L."/>
            <person name="Huson D.H."/>
            <person name="Kravitz S.A."/>
            <person name="Mouchard L."/>
            <person name="Reinert K."/>
            <person name="Remington K.A."/>
            <person name="Clark A.G."/>
            <person name="Waterman M.S."/>
            <person name="Eichler E.E."/>
            <person name="Adams M.D."/>
            <person name="Hunkapiller M.W."/>
            <person name="Myers E.W."/>
            <person name="Venter J.C."/>
        </authorList>
    </citation>
    <scope>NUCLEOTIDE SEQUENCE [LARGE SCALE GENOMIC DNA]</scope>
</reference>
<reference key="4">
    <citation type="journal article" date="2004" name="Genome Res.">
        <title>The status, quality, and expansion of the NIH full-length cDNA project: the Mammalian Gene Collection (MGC).</title>
        <authorList>
            <consortium name="The MGC Project Team"/>
        </authorList>
    </citation>
    <scope>NUCLEOTIDE SEQUENCE [LARGE SCALE MRNA] (ISOFORM 2)</scope>
    <source>
        <tissue>Brain</tissue>
    </source>
</reference>
<reference key="5">
    <citation type="journal article" date="2000" name="J. Biol. Chem.">
        <title>Brain S100A5 is a novel calcium-, zinc-, and copper ion-binding protein of the EF-hand superfamily.</title>
        <authorList>
            <person name="Schaefer B.W."/>
            <person name="Fritschy J.-M."/>
            <person name="Murmann P."/>
            <person name="Troxler H."/>
            <person name="Durussel I."/>
            <person name="Heizmann C.W."/>
            <person name="Cox J.A."/>
        </authorList>
    </citation>
    <scope>FUNCTION</scope>
</reference>
<reference key="6">
    <citation type="journal article" date="2009" name="J. Biol. Inorg. Chem.">
        <title>Solution structure and dynamics of S100A5 in the apo and Ca2+-bound states.</title>
        <authorList>
            <person name="Bertini I."/>
            <person name="Das Gupta S."/>
            <person name="Hu X."/>
            <person name="Karavelas T."/>
            <person name="Luchinat C."/>
            <person name="Parigi G."/>
            <person name="Yuan J."/>
        </authorList>
    </citation>
    <scope>STRUCTURE BY NMR IN COMPLEX WITH CALCIUM IONS</scope>
    <scope>SUBUNIT</scope>
</reference>
<organism>
    <name type="scientific">Homo sapiens</name>
    <name type="common">Human</name>
    <dbReference type="NCBI Taxonomy" id="9606"/>
    <lineage>
        <taxon>Eukaryota</taxon>
        <taxon>Metazoa</taxon>
        <taxon>Chordata</taxon>
        <taxon>Craniata</taxon>
        <taxon>Vertebrata</taxon>
        <taxon>Euteleostomi</taxon>
        <taxon>Mammalia</taxon>
        <taxon>Eutheria</taxon>
        <taxon>Euarchontoglires</taxon>
        <taxon>Primates</taxon>
        <taxon>Haplorrhini</taxon>
        <taxon>Catarrhini</taxon>
        <taxon>Hominidae</taxon>
        <taxon>Homo</taxon>
    </lineage>
</organism>
<dbReference type="EMBL" id="Z18954">
    <property type="protein sequence ID" value="CAA79479.1"/>
    <property type="status" value="ALT_INIT"/>
    <property type="molecule type" value="mRNA"/>
</dbReference>
<dbReference type="EMBL" id="Z18949">
    <property type="protein sequence ID" value="CAA79472.1"/>
    <property type="status" value="ALT_INIT"/>
    <property type="molecule type" value="Genomic_DNA"/>
</dbReference>
<dbReference type="EMBL" id="Z18950">
    <property type="protein sequence ID" value="CAA79475.1"/>
    <property type="status" value="ALT_INIT"/>
    <property type="molecule type" value="Genomic_DNA"/>
</dbReference>
<dbReference type="EMBL" id="BX470102">
    <property type="status" value="NOT_ANNOTATED_CDS"/>
    <property type="molecule type" value="Genomic_DNA"/>
</dbReference>
<dbReference type="EMBL" id="CH471121">
    <property type="protein sequence ID" value="EAW53317.1"/>
    <property type="molecule type" value="Genomic_DNA"/>
</dbReference>
<dbReference type="EMBL" id="BC093955">
    <property type="protein sequence ID" value="AAH93955.1"/>
    <property type="molecule type" value="mRNA"/>
</dbReference>
<dbReference type="EMBL" id="BC093957">
    <property type="protein sequence ID" value="AAH93957.1"/>
    <property type="molecule type" value="mRNA"/>
</dbReference>
<dbReference type="CCDS" id="CCDS1041.2">
    <molecule id="P33763-1"/>
</dbReference>
<dbReference type="RefSeq" id="NP_001381161.1">
    <molecule id="P33763-1"/>
    <property type="nucleotide sequence ID" value="NM_001394232.1"/>
</dbReference>
<dbReference type="RefSeq" id="NP_001381162.1">
    <molecule id="P33763-1"/>
    <property type="nucleotide sequence ID" value="NM_001394233.1"/>
</dbReference>
<dbReference type="RefSeq" id="NP_001381163.1">
    <molecule id="P33763-1"/>
    <property type="nucleotide sequence ID" value="NM_001394234.1"/>
</dbReference>
<dbReference type="RefSeq" id="NP_002953.2">
    <molecule id="P33763-1"/>
    <property type="nucleotide sequence ID" value="NM_002962.2"/>
</dbReference>
<dbReference type="RefSeq" id="XP_016857519.1">
    <property type="nucleotide sequence ID" value="XM_017002030.1"/>
</dbReference>
<dbReference type="RefSeq" id="XP_016857520.1">
    <molecule id="P33763-1"/>
    <property type="nucleotide sequence ID" value="XM_017002031.2"/>
</dbReference>
<dbReference type="RefSeq" id="XP_016857521.1">
    <molecule id="P33763-1"/>
    <property type="nucleotide sequence ID" value="XM_017002032.2"/>
</dbReference>
<dbReference type="RefSeq" id="XP_054194086.1">
    <molecule id="P33763-1"/>
    <property type="nucleotide sequence ID" value="XM_054338111.1"/>
</dbReference>
<dbReference type="RefSeq" id="XP_054194087.1">
    <molecule id="P33763-1"/>
    <property type="nucleotide sequence ID" value="XM_054338112.1"/>
</dbReference>
<dbReference type="PDB" id="2KAX">
    <property type="method" value="NMR"/>
    <property type="chains" value="A/B=1-92"/>
</dbReference>
<dbReference type="PDB" id="2KAY">
    <property type="method" value="NMR"/>
    <property type="chains" value="A/B=1-92"/>
</dbReference>
<dbReference type="PDB" id="4DIR">
    <property type="method" value="X-ray"/>
    <property type="resolution" value="2.60 A"/>
    <property type="chains" value="A/B=1-92"/>
</dbReference>
<dbReference type="PDB" id="6WN7">
    <property type="method" value="X-ray"/>
    <property type="resolution" value="1.25 A"/>
    <property type="chains" value="A/B/C/D/E/F=1-92"/>
</dbReference>
<dbReference type="PDBsum" id="2KAX"/>
<dbReference type="PDBsum" id="2KAY"/>
<dbReference type="PDBsum" id="4DIR"/>
<dbReference type="PDBsum" id="6WN7"/>
<dbReference type="BMRB" id="P33763"/>
<dbReference type="SMR" id="P33763"/>
<dbReference type="BioGRID" id="112184">
    <property type="interactions" value="2"/>
</dbReference>
<dbReference type="FunCoup" id="P33763">
    <property type="interactions" value="468"/>
</dbReference>
<dbReference type="IntAct" id="P33763">
    <property type="interactions" value="11"/>
</dbReference>
<dbReference type="MINT" id="P33763"/>
<dbReference type="STRING" id="9606.ENSP00000357707"/>
<dbReference type="iPTMnet" id="P33763"/>
<dbReference type="PhosphoSitePlus" id="P33763"/>
<dbReference type="BioMuta" id="S100A5"/>
<dbReference type="DMDM" id="20178321"/>
<dbReference type="MassIVE" id="P33763"/>
<dbReference type="PaxDb" id="9606-ENSP00000357707"/>
<dbReference type="ProteomicsDB" id="54923">
    <molecule id="P33763-1"/>
</dbReference>
<dbReference type="Antibodypedia" id="34125">
    <property type="antibodies" value="288 antibodies from 30 providers"/>
</dbReference>
<dbReference type="DNASU" id="6276"/>
<dbReference type="Ensembl" id="ENST00000368717.3">
    <molecule id="P33763-1"/>
    <property type="protein sequence ID" value="ENSP00000357706.2"/>
    <property type="gene ID" value="ENSG00000196420.8"/>
</dbReference>
<dbReference type="Ensembl" id="ENST00000368718.5">
    <molecule id="P33763-1"/>
    <property type="protein sequence ID" value="ENSP00000357707.1"/>
    <property type="gene ID" value="ENSG00000196420.8"/>
</dbReference>
<dbReference type="GeneID" id="6276"/>
<dbReference type="KEGG" id="hsa:6276"/>
<dbReference type="MANE-Select" id="ENST00000368717.3">
    <property type="protein sequence ID" value="ENSP00000357706.2"/>
    <property type="RefSeq nucleotide sequence ID" value="NM_001394232.1"/>
    <property type="RefSeq protein sequence ID" value="NP_001381161.1"/>
</dbReference>
<dbReference type="UCSC" id="uc001fbx.3">
    <molecule id="P33763-1"/>
    <property type="organism name" value="human"/>
</dbReference>
<dbReference type="AGR" id="HGNC:10495"/>
<dbReference type="CTD" id="6276"/>
<dbReference type="DisGeNET" id="6276"/>
<dbReference type="GeneCards" id="S100A5"/>
<dbReference type="HGNC" id="HGNC:10495">
    <property type="gene designation" value="S100A5"/>
</dbReference>
<dbReference type="HPA" id="ENSG00000196420">
    <property type="expression patterns" value="Tissue enhanced (kidney, skin, thyroid gland)"/>
</dbReference>
<dbReference type="MIM" id="176991">
    <property type="type" value="gene"/>
</dbReference>
<dbReference type="neXtProt" id="NX_P33763"/>
<dbReference type="OpenTargets" id="ENSG00000196420"/>
<dbReference type="PharmGKB" id="PA34907"/>
<dbReference type="VEuPathDB" id="HostDB:ENSG00000196420"/>
<dbReference type="eggNOG" id="ENOG502S40V">
    <property type="taxonomic scope" value="Eukaryota"/>
</dbReference>
<dbReference type="GeneTree" id="ENSGT00940000161986"/>
<dbReference type="HOGENOM" id="CLU_138624_2_0_1"/>
<dbReference type="InParanoid" id="P33763"/>
<dbReference type="OMA" id="CMSYNDF"/>
<dbReference type="OrthoDB" id="8881129at2759"/>
<dbReference type="PAN-GO" id="P33763">
    <property type="GO annotations" value="3 GO annotations based on evolutionary models"/>
</dbReference>
<dbReference type="PhylomeDB" id="P33763"/>
<dbReference type="TreeFam" id="TF332727"/>
<dbReference type="PathwayCommons" id="P33763"/>
<dbReference type="SignaLink" id="P33763"/>
<dbReference type="BioGRID-ORCS" id="6276">
    <property type="hits" value="10 hits in 1139 CRISPR screens"/>
</dbReference>
<dbReference type="EvolutionaryTrace" id="P33763"/>
<dbReference type="GeneWiki" id="S100A5"/>
<dbReference type="GenomeRNAi" id="6276"/>
<dbReference type="Pharos" id="P33763">
    <property type="development level" value="Tbio"/>
</dbReference>
<dbReference type="PRO" id="PR:P33763"/>
<dbReference type="Proteomes" id="UP000005640">
    <property type="component" value="Chromosome 1"/>
</dbReference>
<dbReference type="RNAct" id="P33763">
    <property type="molecule type" value="protein"/>
</dbReference>
<dbReference type="Bgee" id="ENSG00000196420">
    <property type="expression patterns" value="Expressed in granulocyte and 96 other cell types or tissues"/>
</dbReference>
<dbReference type="GO" id="GO:0043025">
    <property type="term" value="C:neuronal cell body"/>
    <property type="evidence" value="ECO:0007669"/>
    <property type="project" value="Ensembl"/>
</dbReference>
<dbReference type="GO" id="GO:0005634">
    <property type="term" value="C:nucleus"/>
    <property type="evidence" value="ECO:0000314"/>
    <property type="project" value="UniProtKB"/>
</dbReference>
<dbReference type="GO" id="GO:0005509">
    <property type="term" value="F:calcium ion binding"/>
    <property type="evidence" value="ECO:0000314"/>
    <property type="project" value="UniProtKB"/>
</dbReference>
<dbReference type="GO" id="GO:0048306">
    <property type="term" value="F:calcium-dependent protein binding"/>
    <property type="evidence" value="ECO:0000318"/>
    <property type="project" value="GO_Central"/>
</dbReference>
<dbReference type="GO" id="GO:0005507">
    <property type="term" value="F:copper ion binding"/>
    <property type="evidence" value="ECO:0000314"/>
    <property type="project" value="UniProtKB"/>
</dbReference>
<dbReference type="GO" id="GO:0042803">
    <property type="term" value="F:protein homodimerization activity"/>
    <property type="evidence" value="ECO:0000353"/>
    <property type="project" value="UniProtKB"/>
</dbReference>
<dbReference type="GO" id="GO:0008270">
    <property type="term" value="F:zinc ion binding"/>
    <property type="evidence" value="ECO:0000314"/>
    <property type="project" value="UniProtKB"/>
</dbReference>
<dbReference type="CDD" id="cd00213">
    <property type="entry name" value="S-100"/>
    <property type="match status" value="1"/>
</dbReference>
<dbReference type="DisProt" id="DP01552"/>
<dbReference type="FunFam" id="1.10.238.10:FF:000044">
    <property type="entry name" value="Protein S100"/>
    <property type="match status" value="1"/>
</dbReference>
<dbReference type="Gene3D" id="1.10.238.10">
    <property type="entry name" value="EF-hand"/>
    <property type="match status" value="1"/>
</dbReference>
<dbReference type="InterPro" id="IPR011992">
    <property type="entry name" value="EF-hand-dom_pair"/>
</dbReference>
<dbReference type="InterPro" id="IPR018247">
    <property type="entry name" value="EF_Hand_1_Ca_BS"/>
</dbReference>
<dbReference type="InterPro" id="IPR002048">
    <property type="entry name" value="EF_hand_dom"/>
</dbReference>
<dbReference type="InterPro" id="IPR034325">
    <property type="entry name" value="S-100_dom"/>
</dbReference>
<dbReference type="InterPro" id="IPR001751">
    <property type="entry name" value="S100/CaBP7/8-like_CS"/>
</dbReference>
<dbReference type="InterPro" id="IPR013787">
    <property type="entry name" value="S100_Ca-bd_sub"/>
</dbReference>
<dbReference type="PANTHER" id="PTHR11639:SF65">
    <property type="entry name" value="PROTEIN S100-A5"/>
    <property type="match status" value="1"/>
</dbReference>
<dbReference type="PANTHER" id="PTHR11639">
    <property type="entry name" value="S100 CALCIUM-BINDING PROTEIN"/>
    <property type="match status" value="1"/>
</dbReference>
<dbReference type="Pfam" id="PF01023">
    <property type="entry name" value="S_100"/>
    <property type="match status" value="1"/>
</dbReference>
<dbReference type="SMART" id="SM00054">
    <property type="entry name" value="EFh"/>
    <property type="match status" value="1"/>
</dbReference>
<dbReference type="SMART" id="SM01394">
    <property type="entry name" value="S_100"/>
    <property type="match status" value="1"/>
</dbReference>
<dbReference type="SUPFAM" id="SSF47473">
    <property type="entry name" value="EF-hand"/>
    <property type="match status" value="1"/>
</dbReference>
<dbReference type="PROSITE" id="PS00018">
    <property type="entry name" value="EF_HAND_1"/>
    <property type="match status" value="1"/>
</dbReference>
<dbReference type="PROSITE" id="PS50222">
    <property type="entry name" value="EF_HAND_2"/>
    <property type="match status" value="1"/>
</dbReference>
<dbReference type="PROSITE" id="PS00303">
    <property type="entry name" value="S100_CABP"/>
    <property type="match status" value="1"/>
</dbReference>
<protein>
    <recommendedName>
        <fullName>Protein S100-A5</fullName>
    </recommendedName>
    <alternativeName>
        <fullName>Protein S-100D</fullName>
    </alternativeName>
    <alternativeName>
        <fullName>S100 calcium-binding protein A5</fullName>
    </alternativeName>
</protein>
<accession>P33763</accession>
<accession>Q52LE7</accession>
<accession>Q5RHS3</accession>
<evidence type="ECO:0000255" key="1">
    <source>
        <dbReference type="PROSITE-ProRule" id="PRU00448"/>
    </source>
</evidence>
<evidence type="ECO:0000269" key="2">
    <source>
    </source>
</evidence>
<evidence type="ECO:0000269" key="3">
    <source>
    </source>
</evidence>
<evidence type="ECO:0000303" key="4">
    <source>
    </source>
</evidence>
<evidence type="ECO:0000305" key="5"/>
<evidence type="ECO:0007829" key="6">
    <source>
        <dbReference type="PDB" id="2KAX"/>
    </source>
</evidence>
<evidence type="ECO:0007829" key="7">
    <source>
        <dbReference type="PDB" id="6WN7"/>
    </source>
</evidence>
<sequence>METPLEKALTTMVTTFHKYSGREGSKLTLSRKELKELIKKELCLGEMKESSIDDLMKSLDKNSDQEIDFKEYSVFLTMLCMAYNDFFLEDNK</sequence>
<name>S10A5_HUMAN</name>
<keyword id="KW-0002">3D-structure</keyword>
<keyword id="KW-0025">Alternative splicing</keyword>
<keyword id="KW-0106">Calcium</keyword>
<keyword id="KW-0186">Copper</keyword>
<keyword id="KW-0479">Metal-binding</keyword>
<keyword id="KW-1185">Reference proteome</keyword>
<keyword id="KW-0677">Repeat</keyword>
<keyword id="KW-0862">Zinc</keyword>
<proteinExistence type="evidence at protein level"/>